<sequence>MAALEGPLLLPPSASLTTSPQTTCYQATWESQLEIFCCLATNSHLQAELTLEGLDKMMQPEPTFFACRAIRRLLLGERLHPFIHQEGTLLGKVGRRYSGEGLIIDGGGVFTRGQIDTDNYLPAVGSWELTDDCDKPCEFRELRSLYLPALLTCTICYKAMFRIVCRYLEFWEFEQCFHAFLAVLPHSLQPTIYQNYFALLESLKHLSFSIMPPASPDAQLHFLKFNISSFMATWGWHGELVSLRRAIAHNVERLPTVLKNLSKQSKHQDVKVNGRDLVGFQLALNQLVSRLHVKIQRKDPGPKPYRVVVSTPDCTYYLVYPGTPAIYRLVMCMAVADCIGHSCSGLHPCANFLGTHETPRLLAATLSRIRYAPKDRRAAMKGNLQACFQRYAATDARTLGSSTVSDMLEPTKHVSLENFKITIFNTNMVINTKISCHVPNTLQKTILNIPRLTNNFVIRKYSVKEPSFTISVFFSDNMCQGTAININISGDMLHFLFAMGTLKCFLPIRHIFPVSIANWNSTLDLHGLENQYMVRMGRKNVFWTTNFPSVVSSKDGLNVSWFKAATATISKVYGQPLVEQIRHELAPILTDQHARIDGNKNRIFSLLEHRNRSQIQTLHKRFLECLVECCSFLRLDVACIRRAAARGLFDFSKKIISHTKSKHECAVLGYKKCNLIPKIYARNKKTRLDELGRNANFISFVATTGHRFAALKPQIVRHAIRKLGLHWRHRTAASNEQTPPADPRVRCVRPLV</sequence>
<name>ORF24_HHV8P</name>
<accession>F5HFD2</accession>
<proteinExistence type="evidence at protein level"/>
<protein>
    <recommendedName>
        <fullName>Protein ORF24</fullName>
    </recommendedName>
</protein>
<comment type="function">
    <text evidence="1">Plays a role in the expression of late viral mRNAs together with ORF34.</text>
</comment>
<comment type="subunit">
    <text evidence="1">Interacts with ORF34.</text>
</comment>
<comment type="similarity">
    <text evidence="2">Belongs to the herpesviridae UL87 family.</text>
</comment>
<organismHost>
    <name type="scientific">Homo sapiens</name>
    <name type="common">Human</name>
    <dbReference type="NCBI Taxonomy" id="9606"/>
</organismHost>
<feature type="chain" id="PRO_0000423840" description="Protein ORF24">
    <location>
        <begin position="1"/>
        <end position="752"/>
    </location>
</feature>
<feature type="mutagenesis site" description="Marked defects in late gene expression." evidence="1">
    <original>R</original>
    <variation>A</variation>
    <location>
        <position position="328"/>
    </location>
</feature>
<dbReference type="EMBL" id="AF148805">
    <property type="protein sequence ID" value="ABD28875.1"/>
    <property type="molecule type" value="Genomic_DNA"/>
</dbReference>
<dbReference type="RefSeq" id="YP_001129377.1">
    <property type="nucleotide sequence ID" value="NC_009333.1"/>
</dbReference>
<dbReference type="BioGRID" id="1776988">
    <property type="interactions" value="17"/>
</dbReference>
<dbReference type="DNASU" id="4961485"/>
<dbReference type="GeneID" id="4961485"/>
<dbReference type="KEGG" id="vg:4961485"/>
<dbReference type="Proteomes" id="UP000000942">
    <property type="component" value="Segment"/>
</dbReference>
<dbReference type="InterPro" id="IPR004285">
    <property type="entry name" value="Herpes_UL87_C"/>
</dbReference>
<dbReference type="Pfam" id="PF03043">
    <property type="entry name" value="Herpes_UL87"/>
    <property type="match status" value="1"/>
</dbReference>
<evidence type="ECO:0000269" key="1">
    <source>
    </source>
</evidence>
<evidence type="ECO:0000305" key="2"/>
<reference key="1">
    <citation type="journal article" date="1999" name="J. Virol.">
        <title>Identification of a spliced gene from Kaposi's sarcoma-associated herpesvirus encoding a protein with similarities to latent membrane proteins 1 and 2A of Epstein-Barr virus.</title>
        <authorList>
            <person name="Glenn M."/>
            <person name="Rainbow L."/>
            <person name="Aurade F."/>
            <person name="Davison A."/>
            <person name="Schulz T.F."/>
        </authorList>
    </citation>
    <scope>NUCLEOTIDE SEQUENCE [LARGE SCALE GENOMIC DNA]</scope>
</reference>
<reference key="2">
    <citation type="journal article" date="2006" name="J. Gen. Virol.">
        <title>Kaposi's sarcoma-associated herpesvirus immune modulation: an overview.</title>
        <authorList>
            <person name="Rezaee S.A.R."/>
            <person name="Cunningham C."/>
            <person name="Davison A.J."/>
            <person name="Blackbourn D.J."/>
        </authorList>
    </citation>
    <scope>NUCLEOTIDE SEQUENCE [LARGE SCALE GENOMIC DNA]</scope>
</reference>
<reference key="3">
    <citation type="journal article" date="2016" name="J. Virol.">
        <title>Interaction between ORF24 and ORF34 in the Kaposi's Sarcoma-Associated Herpesvirus Late Gene Transcription Factor Complex Is Essential for Viral Late Gene Expression.</title>
        <authorList>
            <person name="Davis Z.H."/>
            <person name="Hesser C.R."/>
            <person name="Park J."/>
            <person name="Glaunsinger B.A."/>
        </authorList>
    </citation>
    <scope>FUNCTION</scope>
    <scope>INTERACTION WITH ORF34</scope>
    <scope>MUTAGENESIS OF ARG-328</scope>
    <scope>SUBCELLULAR LOCATION</scope>
</reference>
<keyword id="KW-1185">Reference proteome</keyword>
<gene>
    <name type="primary">ORF24</name>
</gene>
<organism>
    <name type="scientific">Human herpesvirus 8 type P (isolate GK18)</name>
    <name type="common">HHV-8</name>
    <name type="synonym">Kaposi's sarcoma-associated herpesvirus</name>
    <dbReference type="NCBI Taxonomy" id="868565"/>
    <lineage>
        <taxon>Viruses</taxon>
        <taxon>Duplodnaviria</taxon>
        <taxon>Heunggongvirae</taxon>
        <taxon>Peploviricota</taxon>
        <taxon>Herviviricetes</taxon>
        <taxon>Herpesvirales</taxon>
        <taxon>Orthoherpesviridae</taxon>
        <taxon>Gammaherpesvirinae</taxon>
        <taxon>Rhadinovirus</taxon>
        <taxon>Rhadinovirus humangamma8</taxon>
        <taxon>Human herpesvirus 8</taxon>
    </lineage>
</organism>